<sequence length="133" mass="15172">MTDEQIYAFCDANKDDIRCKCIYPDKSIVRIGIDTRLPYYCWYEPCKRSDALLPASLKKNISRCNVSDCTISLGNVSITDSKLDVNNVCDSKRVATENIAVRYLNQEIRYPIIDIKWLPIGLLALAILILAFF</sequence>
<keyword id="KW-1169">Fusion of virus membrane with host cell membrane</keyword>
<keyword id="KW-1168">Fusion of virus membrane with host membrane</keyword>
<keyword id="KW-0472">Membrane</keyword>
<keyword id="KW-1185">Reference proteome</keyword>
<keyword id="KW-0735">Signal-anchor</keyword>
<keyword id="KW-0812">Transmembrane</keyword>
<keyword id="KW-1133">Transmembrane helix</keyword>
<keyword id="KW-0261">Viral envelope protein</keyword>
<keyword id="KW-1162">Viral penetration into host cytoplasm</keyword>
<keyword id="KW-0946">Virion</keyword>
<keyword id="KW-1160">Virus entry into host cell</keyword>
<dbReference type="EMBL" id="X67119">
    <property type="protein sequence ID" value="CAA47581.1"/>
    <property type="molecule type" value="Genomic_DNA"/>
</dbReference>
<dbReference type="EMBL" id="S55844">
    <property type="protein sequence ID" value="AAB24678.1"/>
    <property type="molecule type" value="Genomic_DNA"/>
</dbReference>
<dbReference type="EMBL" id="X69198">
    <property type="protein sequence ID" value="CAA49023.1"/>
    <property type="molecule type" value="Genomic_DNA"/>
</dbReference>
<dbReference type="PIR" id="H72160">
    <property type="entry name" value="H72160"/>
</dbReference>
<dbReference type="PIR" id="S33096">
    <property type="entry name" value="S33096"/>
</dbReference>
<dbReference type="RefSeq" id="NP_042126.1">
    <property type="nucleotide sequence ID" value="NC_001611.1"/>
</dbReference>
<dbReference type="SMR" id="P33055"/>
<dbReference type="TCDB" id="1.G.11.1.1">
    <property type="family name" value="the poxvirus cell entry protein complex (pep-c) family"/>
</dbReference>
<dbReference type="GeneID" id="1486468"/>
<dbReference type="KEGG" id="vg:1486468"/>
<dbReference type="Proteomes" id="UP000002060">
    <property type="component" value="Segment"/>
</dbReference>
<dbReference type="GO" id="GO:0016020">
    <property type="term" value="C:membrane"/>
    <property type="evidence" value="ECO:0007669"/>
    <property type="project" value="UniProtKB-KW"/>
</dbReference>
<dbReference type="GO" id="GO:0019031">
    <property type="term" value="C:viral envelope"/>
    <property type="evidence" value="ECO:0007669"/>
    <property type="project" value="UniProtKB-KW"/>
</dbReference>
<dbReference type="GO" id="GO:0055036">
    <property type="term" value="C:virion membrane"/>
    <property type="evidence" value="ECO:0007669"/>
    <property type="project" value="UniProtKB-SubCell"/>
</dbReference>
<dbReference type="GO" id="GO:0019064">
    <property type="term" value="P:fusion of virus membrane with host plasma membrane"/>
    <property type="evidence" value="ECO:0007669"/>
    <property type="project" value="UniProtKB-KW"/>
</dbReference>
<dbReference type="GO" id="GO:0046718">
    <property type="term" value="P:symbiont entry into host cell"/>
    <property type="evidence" value="ECO:0007669"/>
    <property type="project" value="UniProtKB-KW"/>
</dbReference>
<dbReference type="InterPro" id="IPR004251">
    <property type="entry name" value="Pox_virus_G9/A16"/>
</dbReference>
<dbReference type="Pfam" id="PF03003">
    <property type="entry name" value="Pox_G9-A16"/>
    <property type="match status" value="1"/>
</dbReference>
<evidence type="ECO:0000250" key="1"/>
<evidence type="ECO:0000250" key="2">
    <source>
        <dbReference type="UniProtKB" id="P07618"/>
    </source>
</evidence>
<evidence type="ECO:0000255" key="3"/>
<evidence type="ECO:0000305" key="4"/>
<proteinExistence type="inferred from homology"/>
<organism>
    <name type="scientific">Variola virus (isolate Human/India/Ind3/1967)</name>
    <name type="common">VARV</name>
    <name type="synonym">Smallpox virus</name>
    <dbReference type="NCBI Taxonomy" id="587200"/>
    <lineage>
        <taxon>Viruses</taxon>
        <taxon>Varidnaviria</taxon>
        <taxon>Bamfordvirae</taxon>
        <taxon>Nucleocytoviricota</taxon>
        <taxon>Pokkesviricetes</taxon>
        <taxon>Chitovirales</taxon>
        <taxon>Poxviridae</taxon>
        <taxon>Chordopoxvirinae</taxon>
        <taxon>Orthopoxvirus</taxon>
        <taxon>Variola virus</taxon>
    </lineage>
</organism>
<comment type="function">
    <text evidence="2">Envelope protein part of the entry-fusion complex responsible for the virus membrane fusion with host cell membrane during virus entry. Also plays a role in cell-cell fusion (syncytium formation).</text>
</comment>
<comment type="subunit">
    <text evidence="2">Part of a stable entry-fusion complex (EFC) which is at least composed of proteins OPG143, OPG147, OPG155, OPG086, OPG094, OPG107, OPG104, and OPG099. Formation of the viral membrane is necessary for the assembly of the complex.</text>
</comment>
<comment type="subcellular location">
    <subcellularLocation>
        <location evidence="2">Virion membrane</location>
        <topology evidence="2">Single-pass membrane protein</topology>
    </subcellularLocation>
    <text evidence="2">Component of the mature virion (MV) membrane. The mature virion is located in the cytoplasm of infected cells and is probably released by cell lysis.</text>
</comment>
<comment type="similarity">
    <text evidence="4">Belongs to the orthopoxvirus OPG104 family.</text>
</comment>
<gene>
    <name type="primary">OPG104</name>
    <name type="ORF">J5L</name>
    <name type="ORF">L5L</name>
</gene>
<accession>P33055</accession>
<reference key="1">
    <citation type="journal article" date="1993" name="Virus Res.">
        <title>Nucleotide sequence analysis of variola virus HindIII M, L, I genome fragments.</title>
        <authorList>
            <person name="Shchelkunov S.N."/>
            <person name="Blinov V.M."/>
            <person name="Totmenin A.V."/>
            <person name="Marennikova S.S."/>
            <person name="Kolykhalov A.A."/>
            <person name="Frolov I.V."/>
            <person name="Chizhikov V.E."/>
            <person name="Gytorov V.V."/>
            <person name="Gashikov P.V."/>
            <person name="Belanov E.F."/>
            <person name="Belavin P.A."/>
            <person name="Resenchuk S.M."/>
            <person name="Andzhaparidze O.G."/>
            <person name="Sandakhchiev L.S."/>
        </authorList>
    </citation>
    <scope>NUCLEOTIDE SEQUENCE [GENOMIC DNA]</scope>
</reference>
<reference key="2">
    <citation type="journal article" date="1993" name="FEBS Lett.">
        <title>Genes of variola and vaccinia viruses necessary to overcome the host protective mechanisms.</title>
        <authorList>
            <person name="Shchelkunov S.N."/>
            <person name="Blinov V.M."/>
            <person name="Sandakhchiev L.S."/>
        </authorList>
    </citation>
    <scope>NUCLEOTIDE SEQUENCE [LARGE SCALE GENOMIC DNA]</scope>
</reference>
<feature type="chain" id="PRO_0000099596" description="Protein OPG104">
    <location>
        <begin position="1"/>
        <end position="133"/>
    </location>
</feature>
<feature type="topological domain" description="Virion surface" evidence="1">
    <location>
        <begin position="1"/>
        <end position="111"/>
    </location>
</feature>
<feature type="transmembrane region" description="Helical; Signal-anchor" evidence="3">
    <location>
        <begin position="112"/>
        <end position="132"/>
    </location>
</feature>
<protein>
    <recommendedName>
        <fullName>Protein OPG104</fullName>
    </recommendedName>
    <alternativeName>
        <fullName>Protein J5</fullName>
    </alternativeName>
</protein>
<name>PG104_VAR67</name>
<organismHost>
    <name type="scientific">Homo sapiens</name>
    <name type="common">Human</name>
    <dbReference type="NCBI Taxonomy" id="9606"/>
</organismHost>